<gene>
    <name evidence="1" type="primary">obg</name>
    <name type="ordered locus">CJA_0460</name>
</gene>
<organism>
    <name type="scientific">Cellvibrio japonicus (strain Ueda107)</name>
    <name type="common">Pseudomonas fluorescens subsp. cellulosa</name>
    <dbReference type="NCBI Taxonomy" id="498211"/>
    <lineage>
        <taxon>Bacteria</taxon>
        <taxon>Pseudomonadati</taxon>
        <taxon>Pseudomonadota</taxon>
        <taxon>Gammaproteobacteria</taxon>
        <taxon>Cellvibrionales</taxon>
        <taxon>Cellvibrionaceae</taxon>
        <taxon>Cellvibrio</taxon>
    </lineage>
</organism>
<sequence length="398" mass="43635">MKFVDEAPISVEAGKGGNGALSFRKEKFVAKGGPDGGDGGDGGSVFLVADENLNTLIDYRFQPKYRAEDGEKGASKNCTGAKGDDLLLPVPVGTTVIDMDTEEVFGDLTEHGQRLKVAQGGFHGLGNTRFKSSTNRVPRKTTPGTEGEKRNLKLELKVLADVGMLGLPNAGKSSFIRAVSSAKPKVADYPFTTLVPNLGVVKVQQHRSFVIADIPGLIEGASEGAGLGVRFLKHLTRCRLLLHMVDMAPVDGSNPVDNVRVIANELQKFSPTLSNRDRWLLLNKIDLLPIDEVEARCAAVVKELEWTGPVFRVSALKHEGTAELSGKIMDHLEAIWEEERENPDARALELERQNQMAAEARERIEELREARRQARLAAGEDDDFNEDDYDVEVIYVNY</sequence>
<feature type="chain" id="PRO_0000385812" description="GTPase Obg">
    <location>
        <begin position="1"/>
        <end position="398"/>
    </location>
</feature>
<feature type="domain" description="Obg" evidence="2">
    <location>
        <begin position="1"/>
        <end position="159"/>
    </location>
</feature>
<feature type="domain" description="OBG-type G" evidence="1">
    <location>
        <begin position="160"/>
        <end position="333"/>
    </location>
</feature>
<feature type="region of interest" description="Disordered" evidence="3">
    <location>
        <begin position="128"/>
        <end position="148"/>
    </location>
</feature>
<feature type="binding site" evidence="1">
    <location>
        <begin position="166"/>
        <end position="173"/>
    </location>
    <ligand>
        <name>GTP</name>
        <dbReference type="ChEBI" id="CHEBI:37565"/>
    </ligand>
</feature>
<feature type="binding site" evidence="1">
    <location>
        <position position="173"/>
    </location>
    <ligand>
        <name>Mg(2+)</name>
        <dbReference type="ChEBI" id="CHEBI:18420"/>
    </ligand>
</feature>
<feature type="binding site" evidence="1">
    <location>
        <begin position="191"/>
        <end position="195"/>
    </location>
    <ligand>
        <name>GTP</name>
        <dbReference type="ChEBI" id="CHEBI:37565"/>
    </ligand>
</feature>
<feature type="binding site" evidence="1">
    <location>
        <position position="193"/>
    </location>
    <ligand>
        <name>Mg(2+)</name>
        <dbReference type="ChEBI" id="CHEBI:18420"/>
    </ligand>
</feature>
<feature type="binding site" evidence="1">
    <location>
        <begin position="213"/>
        <end position="216"/>
    </location>
    <ligand>
        <name>GTP</name>
        <dbReference type="ChEBI" id="CHEBI:37565"/>
    </ligand>
</feature>
<feature type="binding site" evidence="1">
    <location>
        <begin position="283"/>
        <end position="286"/>
    </location>
    <ligand>
        <name>GTP</name>
        <dbReference type="ChEBI" id="CHEBI:37565"/>
    </ligand>
</feature>
<feature type="binding site" evidence="1">
    <location>
        <begin position="314"/>
        <end position="316"/>
    </location>
    <ligand>
        <name>GTP</name>
        <dbReference type="ChEBI" id="CHEBI:37565"/>
    </ligand>
</feature>
<accession>B3PIU9</accession>
<protein>
    <recommendedName>
        <fullName evidence="1">GTPase Obg</fullName>
        <ecNumber evidence="1">3.6.5.-</ecNumber>
    </recommendedName>
    <alternativeName>
        <fullName evidence="1">GTP-binding protein Obg</fullName>
    </alternativeName>
</protein>
<evidence type="ECO:0000255" key="1">
    <source>
        <dbReference type="HAMAP-Rule" id="MF_01454"/>
    </source>
</evidence>
<evidence type="ECO:0000255" key="2">
    <source>
        <dbReference type="PROSITE-ProRule" id="PRU01231"/>
    </source>
</evidence>
<evidence type="ECO:0000256" key="3">
    <source>
        <dbReference type="SAM" id="MobiDB-lite"/>
    </source>
</evidence>
<dbReference type="EC" id="3.6.5.-" evidence="1"/>
<dbReference type="EMBL" id="CP000934">
    <property type="protein sequence ID" value="ACE84320.1"/>
    <property type="molecule type" value="Genomic_DNA"/>
</dbReference>
<dbReference type="RefSeq" id="WP_012486140.1">
    <property type="nucleotide sequence ID" value="NC_010995.1"/>
</dbReference>
<dbReference type="SMR" id="B3PIU9"/>
<dbReference type="STRING" id="498211.CJA_0460"/>
<dbReference type="KEGG" id="cja:CJA_0460"/>
<dbReference type="eggNOG" id="COG0536">
    <property type="taxonomic scope" value="Bacteria"/>
</dbReference>
<dbReference type="HOGENOM" id="CLU_011747_2_0_6"/>
<dbReference type="OrthoDB" id="9807318at2"/>
<dbReference type="Proteomes" id="UP000001036">
    <property type="component" value="Chromosome"/>
</dbReference>
<dbReference type="GO" id="GO:0005737">
    <property type="term" value="C:cytoplasm"/>
    <property type="evidence" value="ECO:0007669"/>
    <property type="project" value="UniProtKB-SubCell"/>
</dbReference>
<dbReference type="GO" id="GO:0005525">
    <property type="term" value="F:GTP binding"/>
    <property type="evidence" value="ECO:0007669"/>
    <property type="project" value="UniProtKB-UniRule"/>
</dbReference>
<dbReference type="GO" id="GO:0003924">
    <property type="term" value="F:GTPase activity"/>
    <property type="evidence" value="ECO:0007669"/>
    <property type="project" value="UniProtKB-UniRule"/>
</dbReference>
<dbReference type="GO" id="GO:0000287">
    <property type="term" value="F:magnesium ion binding"/>
    <property type="evidence" value="ECO:0007669"/>
    <property type="project" value="InterPro"/>
</dbReference>
<dbReference type="GO" id="GO:0042254">
    <property type="term" value="P:ribosome biogenesis"/>
    <property type="evidence" value="ECO:0007669"/>
    <property type="project" value="UniProtKB-UniRule"/>
</dbReference>
<dbReference type="CDD" id="cd01898">
    <property type="entry name" value="Obg"/>
    <property type="match status" value="1"/>
</dbReference>
<dbReference type="FunFam" id="2.70.210.12:FF:000001">
    <property type="entry name" value="GTPase Obg"/>
    <property type="match status" value="1"/>
</dbReference>
<dbReference type="Gene3D" id="2.70.210.12">
    <property type="entry name" value="GTP1/OBG domain"/>
    <property type="match status" value="1"/>
</dbReference>
<dbReference type="Gene3D" id="3.40.50.300">
    <property type="entry name" value="P-loop containing nucleotide triphosphate hydrolases"/>
    <property type="match status" value="1"/>
</dbReference>
<dbReference type="HAMAP" id="MF_01454">
    <property type="entry name" value="GTPase_Obg"/>
    <property type="match status" value="1"/>
</dbReference>
<dbReference type="InterPro" id="IPR031167">
    <property type="entry name" value="G_OBG"/>
</dbReference>
<dbReference type="InterPro" id="IPR006073">
    <property type="entry name" value="GTP-bd"/>
</dbReference>
<dbReference type="InterPro" id="IPR014100">
    <property type="entry name" value="GTP-bd_Obg/CgtA"/>
</dbReference>
<dbReference type="InterPro" id="IPR006074">
    <property type="entry name" value="GTP1-OBG_CS"/>
</dbReference>
<dbReference type="InterPro" id="IPR006169">
    <property type="entry name" value="GTP1_OBG_dom"/>
</dbReference>
<dbReference type="InterPro" id="IPR036726">
    <property type="entry name" value="GTP1_OBG_dom_sf"/>
</dbReference>
<dbReference type="InterPro" id="IPR045086">
    <property type="entry name" value="OBG_GTPase"/>
</dbReference>
<dbReference type="InterPro" id="IPR027417">
    <property type="entry name" value="P-loop_NTPase"/>
</dbReference>
<dbReference type="NCBIfam" id="TIGR02729">
    <property type="entry name" value="Obg_CgtA"/>
    <property type="match status" value="1"/>
</dbReference>
<dbReference type="NCBIfam" id="NF008955">
    <property type="entry name" value="PRK12297.1"/>
    <property type="match status" value="1"/>
</dbReference>
<dbReference type="NCBIfam" id="NF008956">
    <property type="entry name" value="PRK12299.1"/>
    <property type="match status" value="1"/>
</dbReference>
<dbReference type="PANTHER" id="PTHR11702">
    <property type="entry name" value="DEVELOPMENTALLY REGULATED GTP-BINDING PROTEIN-RELATED"/>
    <property type="match status" value="1"/>
</dbReference>
<dbReference type="PANTHER" id="PTHR11702:SF31">
    <property type="entry name" value="MITOCHONDRIAL RIBOSOME-ASSOCIATED GTPASE 2"/>
    <property type="match status" value="1"/>
</dbReference>
<dbReference type="Pfam" id="PF01018">
    <property type="entry name" value="GTP1_OBG"/>
    <property type="match status" value="1"/>
</dbReference>
<dbReference type="Pfam" id="PF01926">
    <property type="entry name" value="MMR_HSR1"/>
    <property type="match status" value="1"/>
</dbReference>
<dbReference type="PIRSF" id="PIRSF002401">
    <property type="entry name" value="GTP_bd_Obg/CgtA"/>
    <property type="match status" value="1"/>
</dbReference>
<dbReference type="PRINTS" id="PR00326">
    <property type="entry name" value="GTP1OBG"/>
</dbReference>
<dbReference type="SUPFAM" id="SSF82051">
    <property type="entry name" value="Obg GTP-binding protein N-terminal domain"/>
    <property type="match status" value="1"/>
</dbReference>
<dbReference type="SUPFAM" id="SSF52540">
    <property type="entry name" value="P-loop containing nucleoside triphosphate hydrolases"/>
    <property type="match status" value="1"/>
</dbReference>
<dbReference type="PROSITE" id="PS51710">
    <property type="entry name" value="G_OBG"/>
    <property type="match status" value="1"/>
</dbReference>
<dbReference type="PROSITE" id="PS00905">
    <property type="entry name" value="GTP1_OBG"/>
    <property type="match status" value="1"/>
</dbReference>
<dbReference type="PROSITE" id="PS51883">
    <property type="entry name" value="OBG"/>
    <property type="match status" value="1"/>
</dbReference>
<keyword id="KW-0963">Cytoplasm</keyword>
<keyword id="KW-0342">GTP-binding</keyword>
<keyword id="KW-0378">Hydrolase</keyword>
<keyword id="KW-0460">Magnesium</keyword>
<keyword id="KW-0479">Metal-binding</keyword>
<keyword id="KW-0547">Nucleotide-binding</keyword>
<keyword id="KW-1185">Reference proteome</keyword>
<proteinExistence type="inferred from homology"/>
<reference key="1">
    <citation type="journal article" date="2008" name="J. Bacteriol.">
        <title>Insights into plant cell wall degradation from the genome sequence of the soil bacterium Cellvibrio japonicus.</title>
        <authorList>
            <person name="DeBoy R.T."/>
            <person name="Mongodin E.F."/>
            <person name="Fouts D.E."/>
            <person name="Tailford L.E."/>
            <person name="Khouri H."/>
            <person name="Emerson J.B."/>
            <person name="Mohamoud Y."/>
            <person name="Watkins K."/>
            <person name="Henrissat B."/>
            <person name="Gilbert H.J."/>
            <person name="Nelson K.E."/>
        </authorList>
    </citation>
    <scope>NUCLEOTIDE SEQUENCE [LARGE SCALE GENOMIC DNA]</scope>
    <source>
        <strain>Ueda107</strain>
    </source>
</reference>
<name>OBG_CELJU</name>
<comment type="function">
    <text evidence="1">An essential GTPase which binds GTP, GDP and possibly (p)ppGpp with moderate affinity, with high nucleotide exchange rates and a fairly low GTP hydrolysis rate. Plays a role in control of the cell cycle, stress response, ribosome biogenesis and in those bacteria that undergo differentiation, in morphogenesis control.</text>
</comment>
<comment type="cofactor">
    <cofactor evidence="1">
        <name>Mg(2+)</name>
        <dbReference type="ChEBI" id="CHEBI:18420"/>
    </cofactor>
</comment>
<comment type="subunit">
    <text evidence="1">Monomer.</text>
</comment>
<comment type="subcellular location">
    <subcellularLocation>
        <location evidence="1">Cytoplasm</location>
    </subcellularLocation>
</comment>
<comment type="similarity">
    <text evidence="1">Belongs to the TRAFAC class OBG-HflX-like GTPase superfamily. OBG GTPase family.</text>
</comment>